<proteinExistence type="inferred from homology"/>
<organism>
    <name type="scientific">Rattus norvegicus</name>
    <name type="common">Rat</name>
    <dbReference type="NCBI Taxonomy" id="10116"/>
    <lineage>
        <taxon>Eukaryota</taxon>
        <taxon>Metazoa</taxon>
        <taxon>Chordata</taxon>
        <taxon>Craniata</taxon>
        <taxon>Vertebrata</taxon>
        <taxon>Euteleostomi</taxon>
        <taxon>Mammalia</taxon>
        <taxon>Eutheria</taxon>
        <taxon>Euarchontoglires</taxon>
        <taxon>Glires</taxon>
        <taxon>Rodentia</taxon>
        <taxon>Myomorpha</taxon>
        <taxon>Muroidea</taxon>
        <taxon>Muridae</taxon>
        <taxon>Murinae</taxon>
        <taxon>Rattus</taxon>
    </lineage>
</organism>
<name>PGLT1_RAT</name>
<feature type="signal peptide" evidence="4">
    <location>
        <begin position="1"/>
        <end position="23"/>
    </location>
</feature>
<feature type="chain" id="PRO_0000429334" description="Protein O-glucosyltransferase 1">
    <location>
        <begin position="24"/>
        <end position="392"/>
    </location>
</feature>
<feature type="region of interest" description="Interaction with the consensus sequence C-X-S-X-[PA]-C in peptide substrates" evidence="2">
    <location>
        <begin position="103"/>
        <end position="107"/>
    </location>
</feature>
<feature type="region of interest" description="Interaction with the consensus sequence C-X-S-X-[PA]-C in peptide substrates" evidence="2">
    <location>
        <begin position="172"/>
        <end position="178"/>
    </location>
</feature>
<feature type="short sequence motif" description="Prevents secretion from ER" evidence="5">
    <location>
        <begin position="389"/>
        <end position="392"/>
    </location>
</feature>
<feature type="active site" description="Proton donor/acceptor" evidence="3">
    <location>
        <position position="133"/>
    </location>
</feature>
<feature type="binding site" evidence="2">
    <location>
        <position position="177"/>
    </location>
    <ligand>
        <name>UDP-alpha-D-glucose</name>
        <dbReference type="ChEBI" id="CHEBI:58885"/>
    </ligand>
</feature>
<feature type="binding site" evidence="2">
    <location>
        <position position="212"/>
    </location>
    <ligand>
        <name>UDP-alpha-D-glucose</name>
        <dbReference type="ChEBI" id="CHEBI:58885"/>
    </ligand>
</feature>
<feature type="binding site" evidence="2">
    <location>
        <position position="218"/>
    </location>
    <ligand>
        <name>UDP-alpha-D-glucose</name>
        <dbReference type="ChEBI" id="CHEBI:58885"/>
    </ligand>
</feature>
<feature type="binding site" evidence="2">
    <location>
        <begin position="274"/>
        <end position="279"/>
    </location>
    <ligand>
        <name>UDP-alpha-D-glucose</name>
        <dbReference type="ChEBI" id="CHEBI:58885"/>
    </ligand>
</feature>
<feature type="site" description="Interaction with the consensus sequence C-X-S-X-[PA]-C in peptide substrates" evidence="2">
    <location>
        <position position="132"/>
    </location>
</feature>
<feature type="site" description="Interaction with the consensus sequence C-X-S-X-[PA]-C in peptide substrates" evidence="2">
    <location>
        <position position="240"/>
    </location>
</feature>
<feature type="glycosylation site" description="N-linked (GlcNAc...) asparagine" evidence="4">
    <location>
        <position position="53"/>
    </location>
</feature>
<feature type="glycosylation site" description="N-linked (GlcNAc...) asparagine" evidence="4">
    <location>
        <position position="204"/>
    </location>
</feature>
<feature type="glycosylation site" description="N-linked (GlcNAc...) asparagine" evidence="4">
    <location>
        <position position="373"/>
    </location>
</feature>
<feature type="disulfide bond" evidence="2">
    <location>
        <begin position="49"/>
        <end position="56"/>
    </location>
</feature>
<feature type="disulfide bond" evidence="2">
    <location>
        <begin position="54"/>
        <end position="357"/>
    </location>
</feature>
<feature type="disulfide bond" evidence="2">
    <location>
        <begin position="102"/>
        <end position="108"/>
    </location>
</feature>
<feature type="disulfide bond" evidence="2">
    <location>
        <begin position="263"/>
        <end position="286"/>
    </location>
</feature>
<gene>
    <name type="primary">Poglut1</name>
</gene>
<reference key="1">
    <citation type="journal article" date="2004" name="Nature">
        <title>Genome sequence of the Brown Norway rat yields insights into mammalian evolution.</title>
        <authorList>
            <person name="Gibbs R.A."/>
            <person name="Weinstock G.M."/>
            <person name="Metzker M.L."/>
            <person name="Muzny D.M."/>
            <person name="Sodergren E.J."/>
            <person name="Scherer S."/>
            <person name="Scott G."/>
            <person name="Steffen D."/>
            <person name="Worley K.C."/>
            <person name="Burch P.E."/>
            <person name="Okwuonu G."/>
            <person name="Hines S."/>
            <person name="Lewis L."/>
            <person name="Deramo C."/>
            <person name="Delgado O."/>
            <person name="Dugan-Rocha S."/>
            <person name="Miner G."/>
            <person name="Morgan M."/>
            <person name="Hawes A."/>
            <person name="Gill R."/>
            <person name="Holt R.A."/>
            <person name="Adams M.D."/>
            <person name="Amanatides P.G."/>
            <person name="Baden-Tillson H."/>
            <person name="Barnstead M."/>
            <person name="Chin S."/>
            <person name="Evans C.A."/>
            <person name="Ferriera S."/>
            <person name="Fosler C."/>
            <person name="Glodek A."/>
            <person name="Gu Z."/>
            <person name="Jennings D."/>
            <person name="Kraft C.L."/>
            <person name="Nguyen T."/>
            <person name="Pfannkoch C.M."/>
            <person name="Sitter C."/>
            <person name="Sutton G.G."/>
            <person name="Venter J.C."/>
            <person name="Woodage T."/>
            <person name="Smith D."/>
            <person name="Lee H.-M."/>
            <person name="Gustafson E."/>
            <person name="Cahill P."/>
            <person name="Kana A."/>
            <person name="Doucette-Stamm L."/>
            <person name="Weinstock K."/>
            <person name="Fechtel K."/>
            <person name="Weiss R.B."/>
            <person name="Dunn D.M."/>
            <person name="Green E.D."/>
            <person name="Blakesley R.W."/>
            <person name="Bouffard G.G."/>
            <person name="De Jong P.J."/>
            <person name="Osoegawa K."/>
            <person name="Zhu B."/>
            <person name="Marra M."/>
            <person name="Schein J."/>
            <person name="Bosdet I."/>
            <person name="Fjell C."/>
            <person name="Jones S."/>
            <person name="Krzywinski M."/>
            <person name="Mathewson C."/>
            <person name="Siddiqui A."/>
            <person name="Wye N."/>
            <person name="McPherson J."/>
            <person name="Zhao S."/>
            <person name="Fraser C.M."/>
            <person name="Shetty J."/>
            <person name="Shatsman S."/>
            <person name="Geer K."/>
            <person name="Chen Y."/>
            <person name="Abramzon S."/>
            <person name="Nierman W.C."/>
            <person name="Havlak P.H."/>
            <person name="Chen R."/>
            <person name="Durbin K.J."/>
            <person name="Egan A."/>
            <person name="Ren Y."/>
            <person name="Song X.-Z."/>
            <person name="Li B."/>
            <person name="Liu Y."/>
            <person name="Qin X."/>
            <person name="Cawley S."/>
            <person name="Cooney A.J."/>
            <person name="D'Souza L.M."/>
            <person name="Martin K."/>
            <person name="Wu J.Q."/>
            <person name="Gonzalez-Garay M.L."/>
            <person name="Jackson A.R."/>
            <person name="Kalafus K.J."/>
            <person name="McLeod M.P."/>
            <person name="Milosavljevic A."/>
            <person name="Virk D."/>
            <person name="Volkov A."/>
            <person name="Wheeler D.A."/>
            <person name="Zhang Z."/>
            <person name="Bailey J.A."/>
            <person name="Eichler E.E."/>
            <person name="Tuzun E."/>
            <person name="Birney E."/>
            <person name="Mongin E."/>
            <person name="Ureta-Vidal A."/>
            <person name="Woodwark C."/>
            <person name="Zdobnov E."/>
            <person name="Bork P."/>
            <person name="Suyama M."/>
            <person name="Torrents D."/>
            <person name="Alexandersson M."/>
            <person name="Trask B.J."/>
            <person name="Young J.M."/>
            <person name="Huang H."/>
            <person name="Wang H."/>
            <person name="Xing H."/>
            <person name="Daniels S."/>
            <person name="Gietzen D."/>
            <person name="Schmidt J."/>
            <person name="Stevens K."/>
            <person name="Vitt U."/>
            <person name="Wingrove J."/>
            <person name="Camara F."/>
            <person name="Mar Alba M."/>
            <person name="Abril J.F."/>
            <person name="Guigo R."/>
            <person name="Smit A."/>
            <person name="Dubchak I."/>
            <person name="Rubin E.M."/>
            <person name="Couronne O."/>
            <person name="Poliakov A."/>
            <person name="Huebner N."/>
            <person name="Ganten D."/>
            <person name="Goesele C."/>
            <person name="Hummel O."/>
            <person name="Kreitler T."/>
            <person name="Lee Y.-A."/>
            <person name="Monti J."/>
            <person name="Schulz H."/>
            <person name="Zimdahl H."/>
            <person name="Himmelbauer H."/>
            <person name="Lehrach H."/>
            <person name="Jacob H.J."/>
            <person name="Bromberg S."/>
            <person name="Gullings-Handley J."/>
            <person name="Jensen-Seaman M.I."/>
            <person name="Kwitek A.E."/>
            <person name="Lazar J."/>
            <person name="Pasko D."/>
            <person name="Tonellato P.J."/>
            <person name="Twigger S."/>
            <person name="Ponting C.P."/>
            <person name="Duarte J.M."/>
            <person name="Rice S."/>
            <person name="Goodstadt L."/>
            <person name="Beatson S.A."/>
            <person name="Emes R.D."/>
            <person name="Winter E.E."/>
            <person name="Webber C."/>
            <person name="Brandt P."/>
            <person name="Nyakatura G."/>
            <person name="Adetobi M."/>
            <person name="Chiaromonte F."/>
            <person name="Elnitski L."/>
            <person name="Eswara P."/>
            <person name="Hardison R.C."/>
            <person name="Hou M."/>
            <person name="Kolbe D."/>
            <person name="Makova K."/>
            <person name="Miller W."/>
            <person name="Nekrutenko A."/>
            <person name="Riemer C."/>
            <person name="Schwartz S."/>
            <person name="Taylor J."/>
            <person name="Yang S."/>
            <person name="Zhang Y."/>
            <person name="Lindpaintner K."/>
            <person name="Andrews T.D."/>
            <person name="Caccamo M."/>
            <person name="Clamp M."/>
            <person name="Clarke L."/>
            <person name="Curwen V."/>
            <person name="Durbin R.M."/>
            <person name="Eyras E."/>
            <person name="Searle S.M."/>
            <person name="Cooper G.M."/>
            <person name="Batzoglou S."/>
            <person name="Brudno M."/>
            <person name="Sidow A."/>
            <person name="Stone E.A."/>
            <person name="Payseur B.A."/>
            <person name="Bourque G."/>
            <person name="Lopez-Otin C."/>
            <person name="Puente X.S."/>
            <person name="Chakrabarti K."/>
            <person name="Chatterji S."/>
            <person name="Dewey C."/>
            <person name="Pachter L."/>
            <person name="Bray N."/>
            <person name="Yap V.B."/>
            <person name="Caspi A."/>
            <person name="Tesler G."/>
            <person name="Pevzner P.A."/>
            <person name="Haussler D."/>
            <person name="Roskin K.M."/>
            <person name="Baertsch R."/>
            <person name="Clawson H."/>
            <person name="Furey T.S."/>
            <person name="Hinrichs A.S."/>
            <person name="Karolchik D."/>
            <person name="Kent W.J."/>
            <person name="Rosenbloom K.R."/>
            <person name="Trumbower H."/>
            <person name="Weirauch M."/>
            <person name="Cooper D.N."/>
            <person name="Stenson P.D."/>
            <person name="Ma B."/>
            <person name="Brent M."/>
            <person name="Arumugam M."/>
            <person name="Shteynberg D."/>
            <person name="Copley R.R."/>
            <person name="Taylor M.S."/>
            <person name="Riethman H."/>
            <person name="Mudunuri U."/>
            <person name="Peterson J."/>
            <person name="Guyer M."/>
            <person name="Felsenfeld A."/>
            <person name="Old S."/>
            <person name="Mockrin S."/>
            <person name="Collins F.S."/>
        </authorList>
    </citation>
    <scope>NUCLEOTIDE SEQUENCE [LARGE SCALE GENOMIC DNA]</scope>
    <source>
        <strain>Brown Norway</strain>
    </source>
</reference>
<reference key="2">
    <citation type="submission" date="2005-07" db="EMBL/GenBank/DDBJ databases">
        <authorList>
            <person name="Mural R.J."/>
            <person name="Adams M.D."/>
            <person name="Myers E.W."/>
            <person name="Smith H.O."/>
            <person name="Venter J.C."/>
        </authorList>
    </citation>
    <scope>NUCLEOTIDE SEQUENCE [LARGE SCALE GENOMIC DNA]</scope>
</reference>
<reference key="3">
    <citation type="journal article" date="2011" name="Proc. Natl. Acad. Sci. U.S.A.">
        <title>Rumi functions as both a protein O-glucosyltransferase and a protein O-xylosyltransferase.</title>
        <authorList>
            <person name="Takeuchi H."/>
            <person name="Fernandez-Valdivia R.C."/>
            <person name="Caswell D.S."/>
            <person name="Nita-Lazar A."/>
            <person name="Rana N.A."/>
            <person name="Garner T.P."/>
            <person name="Weldeghiorghis T.K."/>
            <person name="Macnaughtan M.A."/>
            <person name="Jafar-Nejad H."/>
            <person name="Haltiwanger R.S."/>
        </authorList>
    </citation>
    <scope>SUBCELLULAR LOCATION</scope>
</reference>
<sequence>MERLSGCRLRPWMLLLLLFPVQGRQKDSGSKWKVFIDQINRALENYEPCSSQNCSCYHGVIEEDLTPFRGGISRKMMAEVVRRRLGTHYQIIKHRLFREDDCMFPSRCSGVEHFILEVIRRLPDMEMVINVRDYPQVPKWMEPTIPVFSFSKTSEYHDIMYPAWTFWEGGPAVWPLYPTGLGRWDLFREDLLRSAAQWPWEKKNSTAYFRGSRTSPERDPLILLSRKNPKLVDAEYTKNQAWKSMKDTLGKPAAKDVHLIDHCKYKYLFNFRGVAASFRFKHLFLCGSLVFHVGDEWVEFFYPQLKPWVHYIPVKTDLSDVQELLQFVKANDDLAQEIAKRGSQFIINHLQMDDITCYWENLLTEYSKFLSYNVTRRKDYYQIIPRRLKTEL</sequence>
<protein>
    <recommendedName>
        <fullName>Protein O-glucosyltransferase 1</fullName>
        <ecNumber evidence="2">2.4.1.376</ecNumber>
    </recommendedName>
    <alternativeName>
        <fullName>O-glucosyltransferase Rumi homolog</fullName>
    </alternativeName>
    <alternativeName>
        <fullName>Protein O-xylosyltransferase</fullName>
        <ecNumber evidence="2">2.4.2.63</ecNumber>
    </alternativeName>
</protein>
<comment type="function">
    <text evidence="1 2">Dual specificity glycosyltransferase that catalyzes the transfer of glucose and xylose from UDP-glucose and UDP-xylose, respectively, to a serine residue found in the consensus sequence of C-X-S-X-P-C. Specifically targets extracellular EGF repeats of protein such as CRB2, F7, F9 and NOTCH2 (By similarity). Acts as a positive regulator of Notch signaling by mediating O-glucosylation of Notch, leading to regulate muscle development (By similarity). Notch glucosylation does not affect Notch ligand binding (By similarity). Required during early development to promote gastrulation: acts by mediating O-glucosylation of CRB2, which is required for CRB2 localization to the cell membrane (By similarity).</text>
</comment>
<comment type="catalytic activity">
    <reaction evidence="2">
        <text>L-seryl-[EGF-like domain protein] + UDP-alpha-D-xylose = 3-O-(beta-D-xylosyl)-L-seryl-[EGF-like domain protein] + UDP + H(+)</text>
        <dbReference type="Rhea" id="RHEA:62016"/>
        <dbReference type="Rhea" id="RHEA-COMP:16010"/>
        <dbReference type="Rhea" id="RHEA-COMP:16011"/>
        <dbReference type="ChEBI" id="CHEBI:15378"/>
        <dbReference type="ChEBI" id="CHEBI:29999"/>
        <dbReference type="ChEBI" id="CHEBI:57632"/>
        <dbReference type="ChEBI" id="CHEBI:58223"/>
        <dbReference type="ChEBI" id="CHEBI:132085"/>
        <dbReference type="EC" id="2.4.2.63"/>
    </reaction>
</comment>
<comment type="catalytic activity">
    <reaction evidence="2">
        <text>L-seryl-[EGF-like domain protein] + UDP-alpha-D-glucose = 3-O-(beta-D-glucosyl)-L-seryl-[EGF-like domain protein] + UDP + H(+)</text>
        <dbReference type="Rhea" id="RHEA:58116"/>
        <dbReference type="Rhea" id="RHEA-COMP:14610"/>
        <dbReference type="Rhea" id="RHEA-COMP:16010"/>
        <dbReference type="ChEBI" id="CHEBI:15378"/>
        <dbReference type="ChEBI" id="CHEBI:29999"/>
        <dbReference type="ChEBI" id="CHEBI:58223"/>
        <dbReference type="ChEBI" id="CHEBI:58885"/>
        <dbReference type="ChEBI" id="CHEBI:140576"/>
        <dbReference type="EC" id="2.4.1.376"/>
    </reaction>
</comment>
<comment type="pathway">
    <text evidence="1">Protein modification; protein glycosylation.</text>
</comment>
<comment type="subcellular location">
    <subcellularLocation>
        <location evidence="6">Endoplasmic reticulum lumen</location>
    </subcellularLocation>
</comment>
<comment type="similarity">
    <text evidence="7">Belongs to the glycosyltransferase 90 family.</text>
</comment>
<accession>G3V9D0</accession>
<evidence type="ECO:0000250" key="1">
    <source>
        <dbReference type="UniProtKB" id="Q8BYB9"/>
    </source>
</evidence>
<evidence type="ECO:0000250" key="2">
    <source>
        <dbReference type="UniProtKB" id="Q8NBL1"/>
    </source>
</evidence>
<evidence type="ECO:0000250" key="3">
    <source>
        <dbReference type="UniProtKB" id="Q8T045"/>
    </source>
</evidence>
<evidence type="ECO:0000255" key="4"/>
<evidence type="ECO:0000255" key="5">
    <source>
        <dbReference type="PROSITE-ProRule" id="PRU10138"/>
    </source>
</evidence>
<evidence type="ECO:0000269" key="6">
    <source>
    </source>
</evidence>
<evidence type="ECO:0000305" key="7"/>
<keyword id="KW-0217">Developmental protein</keyword>
<keyword id="KW-1015">Disulfide bond</keyword>
<keyword id="KW-0256">Endoplasmic reticulum</keyword>
<keyword id="KW-0306">Gastrulation</keyword>
<keyword id="KW-0325">Glycoprotein</keyword>
<keyword id="KW-0328">Glycosyltransferase</keyword>
<keyword id="KW-1185">Reference proteome</keyword>
<keyword id="KW-0732">Signal</keyword>
<keyword id="KW-0808">Transferase</keyword>
<dbReference type="EC" id="2.4.1.376" evidence="2"/>
<dbReference type="EC" id="2.4.2.63" evidence="2"/>
<dbReference type="EMBL" id="AABR06068759">
    <property type="status" value="NOT_ANNOTATED_CDS"/>
    <property type="molecule type" value="Genomic_DNA"/>
</dbReference>
<dbReference type="EMBL" id="AABR06068760">
    <property type="status" value="NOT_ANNOTATED_CDS"/>
    <property type="molecule type" value="Genomic_DNA"/>
</dbReference>
<dbReference type="EMBL" id="CH473967">
    <property type="protein sequence ID" value="EDM11213.1"/>
    <property type="molecule type" value="Genomic_DNA"/>
</dbReference>
<dbReference type="RefSeq" id="NP_001094122.1">
    <property type="nucleotide sequence ID" value="NM_001100652.1"/>
</dbReference>
<dbReference type="SMR" id="G3V9D0"/>
<dbReference type="FunCoup" id="G3V9D0">
    <property type="interactions" value="2957"/>
</dbReference>
<dbReference type="STRING" id="10116.ENSRNOP00000042736"/>
<dbReference type="GlyCosmos" id="G3V9D0">
    <property type="glycosylation" value="3 sites, No reported glycans"/>
</dbReference>
<dbReference type="GlyGen" id="G3V9D0">
    <property type="glycosylation" value="3 sites"/>
</dbReference>
<dbReference type="PhosphoSitePlus" id="G3V9D0"/>
<dbReference type="jPOST" id="G3V9D0"/>
<dbReference type="PaxDb" id="10116-ENSRNOP00000042736"/>
<dbReference type="GeneID" id="288091"/>
<dbReference type="KEGG" id="rno:288091"/>
<dbReference type="AGR" id="RGD:1306248"/>
<dbReference type="CTD" id="56983"/>
<dbReference type="RGD" id="1306248">
    <property type="gene designation" value="Poglut1"/>
</dbReference>
<dbReference type="eggNOG" id="KOG2458">
    <property type="taxonomic scope" value="Eukaryota"/>
</dbReference>
<dbReference type="HOGENOM" id="CLU_041919_1_0_1"/>
<dbReference type="InParanoid" id="G3V9D0"/>
<dbReference type="OrthoDB" id="4285at9989"/>
<dbReference type="TreeFam" id="TF323280"/>
<dbReference type="UniPathway" id="UPA00378"/>
<dbReference type="PRO" id="PR:G3V9D0"/>
<dbReference type="Proteomes" id="UP000002494">
    <property type="component" value="Unplaced"/>
</dbReference>
<dbReference type="Proteomes" id="UP000234681">
    <property type="component" value="Chromosome 11"/>
</dbReference>
<dbReference type="GO" id="GO:0012505">
    <property type="term" value="C:endomembrane system"/>
    <property type="evidence" value="ECO:0000318"/>
    <property type="project" value="GO_Central"/>
</dbReference>
<dbReference type="GO" id="GO:0005788">
    <property type="term" value="C:endoplasmic reticulum lumen"/>
    <property type="evidence" value="ECO:0000250"/>
    <property type="project" value="UniProtKB"/>
</dbReference>
<dbReference type="GO" id="GO:0140561">
    <property type="term" value="F:EGF-domain serine glucosyltransferase activity"/>
    <property type="evidence" value="ECO:0007669"/>
    <property type="project" value="UniProtKB-EC"/>
</dbReference>
<dbReference type="GO" id="GO:0140562">
    <property type="term" value="F:EGF-domain serine xylosyltransferase activity"/>
    <property type="evidence" value="ECO:0007669"/>
    <property type="project" value="UniProtKB-EC"/>
</dbReference>
<dbReference type="GO" id="GO:0046527">
    <property type="term" value="F:glucosyltransferase activity"/>
    <property type="evidence" value="ECO:0000266"/>
    <property type="project" value="RGD"/>
</dbReference>
<dbReference type="GO" id="GO:0035251">
    <property type="term" value="F:UDP-glucosyltransferase activity"/>
    <property type="evidence" value="ECO:0000250"/>
    <property type="project" value="UniProtKB"/>
</dbReference>
<dbReference type="GO" id="GO:0035252">
    <property type="term" value="F:UDP-xylosyltransferase activity"/>
    <property type="evidence" value="ECO:0000250"/>
    <property type="project" value="UniProtKB"/>
</dbReference>
<dbReference type="GO" id="GO:0048318">
    <property type="term" value="P:axial mesoderm development"/>
    <property type="evidence" value="ECO:0000266"/>
    <property type="project" value="RGD"/>
</dbReference>
<dbReference type="GO" id="GO:0072359">
    <property type="term" value="P:circulatory system development"/>
    <property type="evidence" value="ECO:0000266"/>
    <property type="project" value="RGD"/>
</dbReference>
<dbReference type="GO" id="GO:0007369">
    <property type="term" value="P:gastrulation"/>
    <property type="evidence" value="ECO:0007669"/>
    <property type="project" value="UniProtKB-KW"/>
</dbReference>
<dbReference type="GO" id="GO:0060537">
    <property type="term" value="P:muscle tissue development"/>
    <property type="evidence" value="ECO:0000250"/>
    <property type="project" value="UniProtKB"/>
</dbReference>
<dbReference type="GO" id="GO:0048339">
    <property type="term" value="P:paraxial mesoderm development"/>
    <property type="evidence" value="ECO:0000266"/>
    <property type="project" value="RGD"/>
</dbReference>
<dbReference type="GO" id="GO:0045747">
    <property type="term" value="P:positive regulation of Notch signaling pathway"/>
    <property type="evidence" value="ECO:0000250"/>
    <property type="project" value="UniProtKB"/>
</dbReference>
<dbReference type="GO" id="GO:0006493">
    <property type="term" value="P:protein O-linked glycosylation"/>
    <property type="evidence" value="ECO:0000266"/>
    <property type="project" value="RGD"/>
</dbReference>
<dbReference type="GO" id="GO:0018242">
    <property type="term" value="P:protein O-linked glycosylation via serine"/>
    <property type="evidence" value="ECO:0000250"/>
    <property type="project" value="UniProtKB"/>
</dbReference>
<dbReference type="GO" id="GO:0010470">
    <property type="term" value="P:regulation of gastrulation"/>
    <property type="evidence" value="ECO:0000250"/>
    <property type="project" value="UniProtKB"/>
</dbReference>
<dbReference type="GO" id="GO:0008593">
    <property type="term" value="P:regulation of Notch signaling pathway"/>
    <property type="evidence" value="ECO:0000266"/>
    <property type="project" value="RGD"/>
</dbReference>
<dbReference type="GO" id="GO:0001756">
    <property type="term" value="P:somitogenesis"/>
    <property type="evidence" value="ECO:0000266"/>
    <property type="project" value="RGD"/>
</dbReference>
<dbReference type="InterPro" id="IPR006598">
    <property type="entry name" value="CAP10"/>
</dbReference>
<dbReference type="InterPro" id="IPR051091">
    <property type="entry name" value="O-Glucosyltr/Glycosyltrsf_90"/>
</dbReference>
<dbReference type="PANTHER" id="PTHR12203">
    <property type="entry name" value="KDEL LYS-ASP-GLU-LEU CONTAINING - RELATED"/>
    <property type="match status" value="1"/>
</dbReference>
<dbReference type="PANTHER" id="PTHR12203:SF35">
    <property type="entry name" value="PROTEIN O-GLUCOSYLTRANSFERASE 1"/>
    <property type="match status" value="1"/>
</dbReference>
<dbReference type="Pfam" id="PF05686">
    <property type="entry name" value="Glyco_transf_90"/>
    <property type="match status" value="1"/>
</dbReference>
<dbReference type="SMART" id="SM00672">
    <property type="entry name" value="CAP10"/>
    <property type="match status" value="1"/>
</dbReference>